<dbReference type="EC" id="2.3.1.89" evidence="1"/>
<dbReference type="EMBL" id="CP000312">
    <property type="protein sequence ID" value="ABG86967.1"/>
    <property type="molecule type" value="Genomic_DNA"/>
</dbReference>
<dbReference type="RefSeq" id="WP_011592758.1">
    <property type="nucleotide sequence ID" value="NC_008262.1"/>
</dbReference>
<dbReference type="SMR" id="Q0SRS1"/>
<dbReference type="KEGG" id="cpr:CPR_1876"/>
<dbReference type="UniPathway" id="UPA00034">
    <property type="reaction ID" value="UER00022"/>
</dbReference>
<dbReference type="Proteomes" id="UP000001824">
    <property type="component" value="Chromosome"/>
</dbReference>
<dbReference type="GO" id="GO:0047200">
    <property type="term" value="F:tetrahydrodipicolinate N-acetyltransferase activity"/>
    <property type="evidence" value="ECO:0007669"/>
    <property type="project" value="UniProtKB-EC"/>
</dbReference>
<dbReference type="GO" id="GO:0019877">
    <property type="term" value="P:diaminopimelate biosynthetic process"/>
    <property type="evidence" value="ECO:0007669"/>
    <property type="project" value="UniProtKB-UniRule"/>
</dbReference>
<dbReference type="GO" id="GO:0009089">
    <property type="term" value="P:lysine biosynthetic process via diaminopimelate"/>
    <property type="evidence" value="ECO:0007669"/>
    <property type="project" value="UniProtKB-UniRule"/>
</dbReference>
<dbReference type="CDD" id="cd03350">
    <property type="entry name" value="LbH_THP_succinylT"/>
    <property type="match status" value="1"/>
</dbReference>
<dbReference type="Gene3D" id="2.160.10.10">
    <property type="entry name" value="Hexapeptide repeat proteins"/>
    <property type="match status" value="1"/>
</dbReference>
<dbReference type="Gene3D" id="3.30.70.250">
    <property type="entry name" value="Malonyl-CoA ACP transacylase, ACP-binding"/>
    <property type="match status" value="1"/>
</dbReference>
<dbReference type="HAMAP" id="MF_01691">
    <property type="entry name" value="DapH"/>
    <property type="match status" value="1"/>
</dbReference>
<dbReference type="InterPro" id="IPR019873">
    <property type="entry name" value="DapH"/>
</dbReference>
<dbReference type="InterPro" id="IPR013710">
    <property type="entry name" value="DapH_N"/>
</dbReference>
<dbReference type="InterPro" id="IPR001451">
    <property type="entry name" value="Hexapep"/>
</dbReference>
<dbReference type="InterPro" id="IPR018357">
    <property type="entry name" value="Hexapep_transf_CS"/>
</dbReference>
<dbReference type="InterPro" id="IPR050179">
    <property type="entry name" value="Trans_hexapeptide_repeat"/>
</dbReference>
<dbReference type="InterPro" id="IPR011004">
    <property type="entry name" value="Trimer_LpxA-like_sf"/>
</dbReference>
<dbReference type="NCBIfam" id="TIGR03532">
    <property type="entry name" value="DapD_Ac"/>
    <property type="match status" value="1"/>
</dbReference>
<dbReference type="PANTHER" id="PTHR43300:SF10">
    <property type="entry name" value="2,3,4,5-TETRAHYDROPYRIDINE-2,6-DICARBOXYLATE N-ACETYLTRANSFERASE"/>
    <property type="match status" value="1"/>
</dbReference>
<dbReference type="PANTHER" id="PTHR43300">
    <property type="entry name" value="ACETYLTRANSFERASE"/>
    <property type="match status" value="1"/>
</dbReference>
<dbReference type="Pfam" id="PF08503">
    <property type="entry name" value="DapH_N"/>
    <property type="match status" value="1"/>
</dbReference>
<dbReference type="Pfam" id="PF14602">
    <property type="entry name" value="Hexapep_2"/>
    <property type="match status" value="2"/>
</dbReference>
<dbReference type="SUPFAM" id="SSF51161">
    <property type="entry name" value="Trimeric LpxA-like enzymes"/>
    <property type="match status" value="1"/>
</dbReference>
<dbReference type="PROSITE" id="PS00101">
    <property type="entry name" value="HEXAPEP_TRANSFERASES"/>
    <property type="match status" value="1"/>
</dbReference>
<proteinExistence type="inferred from homology"/>
<protein>
    <recommendedName>
        <fullName evidence="1">2,3,4,5-tetrahydropyridine-2,6-dicarboxylate N-acetyltransferase</fullName>
        <ecNumber evidence="1">2.3.1.89</ecNumber>
    </recommendedName>
    <alternativeName>
        <fullName evidence="1">Tetrahydrodipicolinate N-acetyltransferase</fullName>
        <shortName evidence="1">THP acetyltransferase</shortName>
        <shortName evidence="1">Tetrahydropicolinate acetylase</shortName>
    </alternativeName>
</protein>
<accession>Q0SRS1</accession>
<evidence type="ECO:0000255" key="1">
    <source>
        <dbReference type="HAMAP-Rule" id="MF_01691"/>
    </source>
</evidence>
<reference key="1">
    <citation type="journal article" date="2006" name="Genome Res.">
        <title>Skewed genomic variability in strains of the toxigenic bacterial pathogen, Clostridium perfringens.</title>
        <authorList>
            <person name="Myers G.S.A."/>
            <person name="Rasko D.A."/>
            <person name="Cheung J.K."/>
            <person name="Ravel J."/>
            <person name="Seshadri R."/>
            <person name="DeBoy R.T."/>
            <person name="Ren Q."/>
            <person name="Varga J."/>
            <person name="Awad M.M."/>
            <person name="Brinkac L.M."/>
            <person name="Daugherty S.C."/>
            <person name="Haft D.H."/>
            <person name="Dodson R.J."/>
            <person name="Madupu R."/>
            <person name="Nelson W.C."/>
            <person name="Rosovitz M.J."/>
            <person name="Sullivan S.A."/>
            <person name="Khouri H."/>
            <person name="Dimitrov G.I."/>
            <person name="Watkins K.L."/>
            <person name="Mulligan S."/>
            <person name="Benton J."/>
            <person name="Radune D."/>
            <person name="Fisher D.J."/>
            <person name="Atkins H.S."/>
            <person name="Hiscox T."/>
            <person name="Jost B.H."/>
            <person name="Billington S.J."/>
            <person name="Songer J.G."/>
            <person name="McClane B.A."/>
            <person name="Titball R.W."/>
            <person name="Rood J.I."/>
            <person name="Melville S.B."/>
            <person name="Paulsen I.T."/>
        </authorList>
    </citation>
    <scope>NUCLEOTIDE SEQUENCE [LARGE SCALE GENOMIC DNA]</scope>
    <source>
        <strain>SM101 / Type A</strain>
    </source>
</reference>
<keyword id="KW-0012">Acyltransferase</keyword>
<keyword id="KW-0028">Amino-acid biosynthesis</keyword>
<keyword id="KW-0220">Diaminopimelate biosynthesis</keyword>
<keyword id="KW-0457">Lysine biosynthesis</keyword>
<keyword id="KW-0677">Repeat</keyword>
<keyword id="KW-0808">Transferase</keyword>
<sequence length="236" mass="25230">MSYNFTDPYEIARFIKEVKKSTPVKVYLKGNLEGVELGSIECYGNNDFYVLFGESDEVATFLTENKDKIVSFRLENDRRNSAIPMLELLNINARIEPGAIIRDRVSIGDNAVIMMGAVINIGAEIGESTMVDMNAVIGARGKLGKRVHLGAGAVVAGVLEPPSKTPCIIEDDVLIGANAVILEGVKIGKGSVVAAGSVVVEDVPAGVVVAGTPAKIIKSVDEKTKDKTEILDDLRK</sequence>
<gene>
    <name evidence="1" type="primary">dapH</name>
    <name type="ordered locus">CPR_1876</name>
</gene>
<comment type="function">
    <text evidence="1">Catalyzes the transfer of an acetyl group from acetyl-CoA to tetrahydrodipicolinate.</text>
</comment>
<comment type="catalytic activity">
    <reaction evidence="1">
        <text>(S)-2,3,4,5-tetrahydrodipicolinate + acetyl-CoA + H2O = L-2-acetamido-6-oxoheptanedioate + CoA</text>
        <dbReference type="Rhea" id="RHEA:13085"/>
        <dbReference type="ChEBI" id="CHEBI:15377"/>
        <dbReference type="ChEBI" id="CHEBI:16845"/>
        <dbReference type="ChEBI" id="CHEBI:57287"/>
        <dbReference type="ChEBI" id="CHEBI:57288"/>
        <dbReference type="ChEBI" id="CHEBI:58117"/>
        <dbReference type="EC" id="2.3.1.89"/>
    </reaction>
</comment>
<comment type="pathway">
    <text evidence="1">Amino-acid biosynthesis; L-lysine biosynthesis via DAP pathway; LL-2,6-diaminopimelate from (S)-tetrahydrodipicolinate (acetylase route): step 1/3.</text>
</comment>
<comment type="similarity">
    <text evidence="1">Belongs to the transferase hexapeptide repeat family. DapH subfamily.</text>
</comment>
<organism>
    <name type="scientific">Clostridium perfringens (strain SM101 / Type A)</name>
    <dbReference type="NCBI Taxonomy" id="289380"/>
    <lineage>
        <taxon>Bacteria</taxon>
        <taxon>Bacillati</taxon>
        <taxon>Bacillota</taxon>
        <taxon>Clostridia</taxon>
        <taxon>Eubacteriales</taxon>
        <taxon>Clostridiaceae</taxon>
        <taxon>Clostridium</taxon>
    </lineage>
</organism>
<feature type="chain" id="PRO_0000376655" description="2,3,4,5-tetrahydropyridine-2,6-dicarboxylate N-acetyltransferase">
    <location>
        <begin position="1"/>
        <end position="236"/>
    </location>
</feature>
<name>DAPH_CLOPS</name>